<gene>
    <name evidence="1" type="primary">ezrA</name>
    <name type="ordered locus">BAA_4911</name>
</gene>
<dbReference type="EMBL" id="CP001598">
    <property type="protein sequence ID" value="ACQ47068.1"/>
    <property type="molecule type" value="Genomic_DNA"/>
</dbReference>
<dbReference type="RefSeq" id="WP_000377289.1">
    <property type="nucleotide sequence ID" value="NC_012659.1"/>
</dbReference>
<dbReference type="SMR" id="C3PBB5"/>
<dbReference type="GeneID" id="45024522"/>
<dbReference type="KEGG" id="bai:BAA_4911"/>
<dbReference type="HOGENOM" id="CLU_034079_1_0_9"/>
<dbReference type="GO" id="GO:0005886">
    <property type="term" value="C:plasma membrane"/>
    <property type="evidence" value="ECO:0007669"/>
    <property type="project" value="UniProtKB-SubCell"/>
</dbReference>
<dbReference type="GO" id="GO:0005940">
    <property type="term" value="C:septin ring"/>
    <property type="evidence" value="ECO:0007669"/>
    <property type="project" value="InterPro"/>
</dbReference>
<dbReference type="GO" id="GO:0000917">
    <property type="term" value="P:division septum assembly"/>
    <property type="evidence" value="ECO:0007669"/>
    <property type="project" value="UniProtKB-KW"/>
</dbReference>
<dbReference type="GO" id="GO:0000921">
    <property type="term" value="P:septin ring assembly"/>
    <property type="evidence" value="ECO:0007669"/>
    <property type="project" value="InterPro"/>
</dbReference>
<dbReference type="HAMAP" id="MF_00728">
    <property type="entry name" value="EzrA"/>
    <property type="match status" value="1"/>
</dbReference>
<dbReference type="InterPro" id="IPR010379">
    <property type="entry name" value="EzrA"/>
</dbReference>
<dbReference type="NCBIfam" id="NF003411">
    <property type="entry name" value="PRK04778.1-5"/>
    <property type="match status" value="1"/>
</dbReference>
<dbReference type="NCBIfam" id="NF003413">
    <property type="entry name" value="PRK04778.1-7"/>
    <property type="match status" value="1"/>
</dbReference>
<dbReference type="Pfam" id="PF06160">
    <property type="entry name" value="EzrA"/>
    <property type="match status" value="1"/>
</dbReference>
<accession>C3PBB5</accession>
<keyword id="KW-0131">Cell cycle</keyword>
<keyword id="KW-0132">Cell division</keyword>
<keyword id="KW-1003">Cell membrane</keyword>
<keyword id="KW-0175">Coiled coil</keyword>
<keyword id="KW-0472">Membrane</keyword>
<keyword id="KW-0717">Septation</keyword>
<keyword id="KW-0812">Transmembrane</keyword>
<keyword id="KW-1133">Transmembrane helix</keyword>
<sequence length="570" mass="66436">MDSILTIVIIVVSSILVLLMIELVIRNRSYKDIEALEQWKQEIKDKPVADELKRVKDLNMTGQTEELFGKWREEWDEIVSTTIPKADKDLAQARKFASQFSFRKAKHAMNESISGLDDADNRITDILNELQQLLESHEKNSSEIEGLRDTYRSMKKSVLAHRHMYGAAEQKIEEMLDAESEKFKTFEEATNNGDYLKAREIVISLEEGLADLEIIIHQIPDLLVECQATLPVQLEDLLHGHNDMVRQGYVLDYLEVPKEVRDMTKQLQTCLIDIQELHITEAAEKVENLKTRLDGFYDQLEQEVHARHYVEQKTLSVYEDLEEIRTETIETKAETQLVKQSYQLQDKDIESQKVIEKQMHILTKRFEMLQLRVAEQDIAFSIIREELEEIYEQCETLKVLHAEYKEMLQTMRKEEFEAREKLQEMRNTIFETKRFMQKSNLPGLPESIMEDLKRGQMAMQAVYEQLEVKPLNMNAVNSSLEEAYTTVNGVAEMTEELIGQAYLVEKLIQYGNRYRSHDENLAESLNYAEKLFREYQYDAALEQAASVLEQLEPGVVQKIAEYVDNEQTLS</sequence>
<protein>
    <recommendedName>
        <fullName evidence="1">Septation ring formation regulator EzrA</fullName>
    </recommendedName>
</protein>
<comment type="function">
    <text evidence="1">Negative regulator of FtsZ ring formation; modulates the frequency and position of FtsZ ring formation. Inhibits FtsZ ring formation at polar sites. Interacts either with FtsZ or with one of its binding partners to promote depolymerization.</text>
</comment>
<comment type="subcellular location">
    <subcellularLocation>
        <location evidence="1">Cell membrane</location>
        <topology evidence="1">Single-pass membrane protein</topology>
    </subcellularLocation>
    <text evidence="1">Colocalized with FtsZ to the nascent septal site.</text>
</comment>
<comment type="similarity">
    <text evidence="1">Belongs to the EzrA family.</text>
</comment>
<organism>
    <name type="scientific">Bacillus anthracis (strain A0248)</name>
    <dbReference type="NCBI Taxonomy" id="592021"/>
    <lineage>
        <taxon>Bacteria</taxon>
        <taxon>Bacillati</taxon>
        <taxon>Bacillota</taxon>
        <taxon>Bacilli</taxon>
        <taxon>Bacillales</taxon>
        <taxon>Bacillaceae</taxon>
        <taxon>Bacillus</taxon>
        <taxon>Bacillus cereus group</taxon>
    </lineage>
</organism>
<feature type="chain" id="PRO_1000148066" description="Septation ring formation regulator EzrA">
    <location>
        <begin position="1"/>
        <end position="570"/>
    </location>
</feature>
<feature type="topological domain" description="Extracellular" evidence="1">
    <location>
        <begin position="1"/>
        <end position="6"/>
    </location>
</feature>
<feature type="transmembrane region" description="Helical" evidence="1">
    <location>
        <begin position="7"/>
        <end position="25"/>
    </location>
</feature>
<feature type="topological domain" description="Cytoplasmic" evidence="1">
    <location>
        <begin position="26"/>
        <end position="570"/>
    </location>
</feature>
<feature type="coiled-coil region" evidence="1">
    <location>
        <begin position="115"/>
        <end position="149"/>
    </location>
</feature>
<feature type="coiled-coil region" evidence="1">
    <location>
        <begin position="272"/>
        <end position="304"/>
    </location>
</feature>
<feature type="coiled-coil region" evidence="1">
    <location>
        <begin position="355"/>
        <end position="429"/>
    </location>
</feature>
<name>EZRA_BACAA</name>
<evidence type="ECO:0000255" key="1">
    <source>
        <dbReference type="HAMAP-Rule" id="MF_00728"/>
    </source>
</evidence>
<reference key="1">
    <citation type="submission" date="2009-04" db="EMBL/GenBank/DDBJ databases">
        <title>Genome sequence of Bacillus anthracis A0248.</title>
        <authorList>
            <person name="Dodson R.J."/>
            <person name="Munk A.C."/>
            <person name="Bruce D."/>
            <person name="Detter C."/>
            <person name="Tapia R."/>
            <person name="Sutton G."/>
            <person name="Sims D."/>
            <person name="Brettin T."/>
        </authorList>
    </citation>
    <scope>NUCLEOTIDE SEQUENCE [LARGE SCALE GENOMIC DNA]</scope>
    <source>
        <strain>A0248</strain>
    </source>
</reference>
<proteinExistence type="inferred from homology"/>